<sequence length="689" mass="73525">MSISALGGRTKGKPLPPGEEERNNVLKQMKVRTTLKGDKSWITKQDESEGRTIELPSGRSRATSFSSAGEVPKPRPPSTRAPTGYIIRGVFTKPIDSSSQPQQQFPKANGTPKSAASLVRTANAGPPRPSSSGYKMTTEDYKKLAPYNIRRSSTSGDTEEEEEEEVVPFSSDEQKRRSEAASGVLRRTAPREHSYVLSAAKKSTGPTQETQAPFIAKRVEVVEEDGPSEKSQDPPALARSTPGSNSADGGRTKASRAIWIECLPSMPSPAGSQELSSRGEEIVRLQILTPRAGLRLVAPDVEGMRSSPGNKDKEAPCSRELQRDLAGEEAFRAPNTDAARSSAQLSDGNVGSGATGSRPEGLAAVDIGSERGSSSATSVSAVPADRKSNSTAAQEDAKADPKGALADYEGKDVATRVGEAWQERPGAPRGGQGDPAVPAQQPADPSTPERQSSPSGSEQLVRRESCGSSVLTDFEGKDVATKVGEAWQDRPGAPRGGQGDPAVPTQQPADPSTPEQQNSPSGSEQFVRRESCTSRVRSPSSCMVTVTVTATSEQPHIYIPAPASELDSSSTTKGILFVKEYVNASEVSSGKPVSARYSNVSSIEDSFAMEKKPPCGSTPYSERTTGGICTYCNREIRDCPKITLEHLGICCHEYCFKCGICSKPMGDLLDQIFIHRDTIHCGKCYEKLF</sequence>
<gene>
    <name type="primary">ZNF185</name>
</gene>
<proteinExistence type="evidence at protein level"/>
<feature type="chain" id="PRO_0000075911" description="Zinc finger protein 185">
    <location>
        <begin position="1"/>
        <end position="689"/>
    </location>
</feature>
<feature type="domain" description="LIM zinc-binding" evidence="2">
    <location>
        <begin position="627"/>
        <end position="689"/>
    </location>
</feature>
<feature type="region of interest" description="Disordered" evidence="3">
    <location>
        <begin position="1"/>
        <end position="253"/>
    </location>
</feature>
<feature type="region of interest" description="Disordered" evidence="3">
    <location>
        <begin position="298"/>
        <end position="534"/>
    </location>
</feature>
<feature type="compositionally biased region" description="Basic and acidic residues" evidence="3">
    <location>
        <begin position="35"/>
        <end position="52"/>
    </location>
</feature>
<feature type="compositionally biased region" description="Polar residues" evidence="3">
    <location>
        <begin position="95"/>
        <end position="114"/>
    </location>
</feature>
<feature type="compositionally biased region" description="Acidic residues" evidence="3">
    <location>
        <begin position="157"/>
        <end position="166"/>
    </location>
</feature>
<feature type="compositionally biased region" description="Basic and acidic residues" evidence="3">
    <location>
        <begin position="217"/>
        <end position="232"/>
    </location>
</feature>
<feature type="compositionally biased region" description="Basic and acidic residues" evidence="3">
    <location>
        <begin position="310"/>
        <end position="331"/>
    </location>
</feature>
<feature type="compositionally biased region" description="Polar residues" evidence="3">
    <location>
        <begin position="338"/>
        <end position="349"/>
    </location>
</feature>
<feature type="compositionally biased region" description="Low complexity" evidence="3">
    <location>
        <begin position="373"/>
        <end position="382"/>
    </location>
</feature>
<feature type="compositionally biased region" description="Low complexity" evidence="3">
    <location>
        <begin position="434"/>
        <end position="444"/>
    </location>
</feature>
<feature type="compositionally biased region" description="Polar residues" evidence="3">
    <location>
        <begin position="448"/>
        <end position="458"/>
    </location>
</feature>
<feature type="compositionally biased region" description="Polar residues" evidence="3">
    <location>
        <begin position="504"/>
        <end position="524"/>
    </location>
</feature>
<feature type="modified residue" description="Phosphoserine" evidence="1">
    <location>
        <position position="153"/>
    </location>
</feature>
<feature type="modified residue" description="Phosphothreonine" evidence="9">
    <location>
        <position position="447"/>
    </location>
</feature>
<feature type="modified residue" description="Phosphoserine" evidence="9">
    <location>
        <position position="453"/>
    </location>
</feature>
<feature type="modified residue" description="Phosphoserine" evidence="9">
    <location>
        <position position="465"/>
    </location>
</feature>
<feature type="splice variant" id="VSP_054773" description="In isoform 9." evidence="5">
    <original>MSISALGGRTKGKPLPPGEEERNNVLKQMKVRTTLKGDKSWITKQDESEGRTIELPSGRSRATSFSSAGEVPKPRPPSTRAPTGYIIRGVFTKPIDSSSQPQQQFPKANGTPKSAASLVRTANAGPPRPSSSGYKMTTEDYKKLAPYNIRRSSTSGDTEEEEEEEVVPFSSDEQKRRSEAASGVLRRTAPREHSYVLSAAKKSTGPTQETQAPFIAKRVEVVEEDGPSEKSQDPPALARSTPGSNSADGGRTKASRAIWIECLPSMPSPAGSQELSSRGEEIVRLQILTPRAGLRLVAPDVEGMRSSPGNKDKEAPCSRELQRDLAGEEAFRAPNTDAARSSAQLSDGNVGSGATGSRPEGLAAVDIGSERGSSSATSVSAVPADRKSNSTAAQEDAKADPKG</original>
    <variation>MAARDELGLGGDSLEAMPVPAARGRPRITNGPEELAAPSPA</variation>
    <location>
        <begin position="1"/>
        <end position="403"/>
    </location>
</feature>
<feature type="splice variant" id="VSP_039898" description="In isoform 2." evidence="7">
    <location>
        <begin position="1"/>
        <end position="140"/>
    </location>
</feature>
<feature type="splice variant" id="VSP_045080" description="In isoform 5." evidence="5">
    <location>
        <begin position="1"/>
        <end position="135"/>
    </location>
</feature>
<feature type="splice variant" id="VSP_039899" description="In isoform 2." evidence="7">
    <original>YKKL</original>
    <variation>MQRQ</variation>
    <location>
        <begin position="141"/>
        <end position="144"/>
    </location>
</feature>
<feature type="splice variant" id="VSP_045081" description="In isoform 5." evidence="5">
    <original>RSEAASGVLRRTAPREHSYVLSAAKKSTG</original>
    <variation>SS</variation>
    <location>
        <begin position="177"/>
        <end position="205"/>
    </location>
</feature>
<feature type="splice variant" id="VSP_039900" description="In isoform 2 and isoform 3." evidence="5 7">
    <original>G</original>
    <variation>GS</variation>
    <location>
        <position position="205"/>
    </location>
</feature>
<feature type="splice variant" id="VSP_043405" description="In isoform 4 and isoform 5." evidence="5 6">
    <location>
        <begin position="246"/>
        <end position="304"/>
    </location>
</feature>
<feature type="splice variant" id="VSP_039901" description="In isoform 2." evidence="7">
    <location>
        <begin position="246"/>
        <end position="275"/>
    </location>
</feature>
<feature type="splice variant" id="VSP_047205" description="In isoform 7 and isoform 8." evidence="6">
    <location>
        <begin position="276"/>
        <end position="304"/>
    </location>
</feature>
<feature type="splice variant" id="VSP_039902" description="In isoform 2." evidence="7">
    <location>
        <begin position="305"/>
        <end position="372"/>
    </location>
</feature>
<feature type="splice variant" id="VSP_047206" description="In isoform 6 and isoform 8." evidence="6">
    <original>G</original>
    <variation>GRLCAAASFASFLEDQDGHSANSQSCKPRPAAI</variation>
    <location>
        <position position="372"/>
    </location>
</feature>
<feature type="sequence conflict" description="In Ref. 2; ABF57661." evidence="8" ref="2">
    <original>K</original>
    <variation>E</variation>
    <location>
        <position position="13"/>
    </location>
</feature>
<feature type="sequence conflict" description="In Ref. 2; ABF57661." evidence="8" ref="2">
    <original>S</original>
    <variation>F</variation>
    <location>
        <position position="132"/>
    </location>
</feature>
<feature type="sequence conflict" description="In Ref. 2; ABF57661." evidence="8" ref="2">
    <original>R</original>
    <variation>G</variation>
    <location>
        <position position="150"/>
    </location>
</feature>
<feature type="sequence conflict" description="In Ref. 3; BAH13507." evidence="8" ref="3">
    <original>A</original>
    <variation>V</variation>
    <location>
        <position position="236"/>
    </location>
</feature>
<feature type="sequence conflict" description="In Ref. 2; ABF57661." evidence="8" ref="2">
    <original>A</original>
    <variation>T</variation>
    <location>
        <position position="257"/>
    </location>
</feature>
<feature type="sequence conflict" description="In Ref. 3; BAH13507." evidence="8" ref="3">
    <original>A</original>
    <variation>S</variation>
    <location>
        <position position="326"/>
    </location>
</feature>
<feature type="sequence conflict" description="In Ref. 2; ABF57661." evidence="8" ref="2">
    <original>A</original>
    <variation>D</variation>
    <location>
        <position position="406"/>
    </location>
</feature>
<feature type="sequence conflict" description="In Ref. 1; CAA70733." evidence="8" ref="1">
    <original>Y</original>
    <variation>C</variation>
    <location>
        <position position="408"/>
    </location>
</feature>
<feature type="sequence conflict" description="In Ref. 2; ABF57657/AAY54245 and 1; CAA70733." evidence="8" ref="2 1">
    <original>A</original>
    <variation>P</variation>
    <location>
        <position position="414"/>
    </location>
</feature>
<feature type="sequence conflict" description="In Ref. 2; ABF57660." evidence="8" ref="2">
    <original>Q</original>
    <variation>H</variation>
    <location>
        <position position="488"/>
    </location>
</feature>
<feature type="sequence conflict" description="In Ref. 1; CAA70733." evidence="8" ref="1">
    <original>G</original>
    <variation>R</variation>
    <location>
        <position position="492"/>
    </location>
</feature>
<feature type="sequence conflict" description="In Ref. 3; BAC04511." evidence="8" ref="3">
    <original>Q</original>
    <variation>R</variation>
    <location>
        <position position="517"/>
    </location>
</feature>
<feature type="sequence conflict" description="In Ref. 2; ABF57657/AAY54245." evidence="8" ref="2">
    <original>S</original>
    <variation>F</variation>
    <location>
        <position position="621"/>
    </location>
</feature>
<feature type="modified residue" description="Phosphoserine" evidence="9">
    <location sequence="O15231-2">
        <position position="66"/>
    </location>
</feature>
<feature type="modified residue" description="Phosphoserine" evidence="9">
    <location sequence="O15231-3">
        <position position="206"/>
    </location>
</feature>
<evidence type="ECO:0000250" key="1">
    <source>
        <dbReference type="UniProtKB" id="Q62394"/>
    </source>
</evidence>
<evidence type="ECO:0000255" key="2">
    <source>
        <dbReference type="PROSITE-ProRule" id="PRU00125"/>
    </source>
</evidence>
<evidence type="ECO:0000256" key="3">
    <source>
        <dbReference type="SAM" id="MobiDB-lite"/>
    </source>
</evidence>
<evidence type="ECO:0000269" key="4">
    <source>
    </source>
</evidence>
<evidence type="ECO:0000303" key="5">
    <source>
    </source>
</evidence>
<evidence type="ECO:0000303" key="6">
    <source>
    </source>
</evidence>
<evidence type="ECO:0000303" key="7">
    <source>
    </source>
</evidence>
<evidence type="ECO:0000305" key="8"/>
<evidence type="ECO:0007744" key="9">
    <source>
    </source>
</evidence>
<reference key="1">
    <citation type="journal article" date="1997" name="Genomics">
        <title>Genomic structure of a novel LIM domain gene (ZNF185) in Xq28 and comparisons with the orthologous murine transcript.</title>
        <authorList>
            <person name="Heiss N.S."/>
            <person name="Gloeckner G."/>
            <person name="Baechner D."/>
            <person name="Kioschis P."/>
            <person name="Klauck S.M."/>
            <person name="Hinzmann B."/>
            <person name="Rosenthal A."/>
            <person name="Herman G.E."/>
            <person name="Poustka A."/>
        </authorList>
    </citation>
    <scope>NUCLEOTIDE SEQUENCE [MRNA] (ISOFORM 2)</scope>
    <source>
        <tissue>Blood</tissue>
    </source>
</reference>
<reference key="2">
    <citation type="journal article" date="2007" name="Oncogene">
        <title>ZNF185, an actin-cytoskeleton-associated growth inhibitory LIM protein in prostate cancer.</title>
        <authorList>
            <person name="Zhang J.S."/>
            <person name="Gong A."/>
            <person name="Young C.Y."/>
        </authorList>
    </citation>
    <scope>NUCLEOTIDE SEQUENCE [MRNA] (ISOFORMS 1; 4; 6; 7 AND 8)</scope>
    <scope>SUBCELLULAR LOCATION</scope>
</reference>
<reference key="3">
    <citation type="journal article" date="2004" name="Nat. Genet.">
        <title>Complete sequencing and characterization of 21,243 full-length human cDNAs.</title>
        <authorList>
            <person name="Ota T."/>
            <person name="Suzuki Y."/>
            <person name="Nishikawa T."/>
            <person name="Otsuki T."/>
            <person name="Sugiyama T."/>
            <person name="Irie R."/>
            <person name="Wakamatsu A."/>
            <person name="Hayashi K."/>
            <person name="Sato H."/>
            <person name="Nagai K."/>
            <person name="Kimura K."/>
            <person name="Makita H."/>
            <person name="Sekine M."/>
            <person name="Obayashi M."/>
            <person name="Nishi T."/>
            <person name="Shibahara T."/>
            <person name="Tanaka T."/>
            <person name="Ishii S."/>
            <person name="Yamamoto J."/>
            <person name="Saito K."/>
            <person name="Kawai Y."/>
            <person name="Isono Y."/>
            <person name="Nakamura Y."/>
            <person name="Nagahari K."/>
            <person name="Murakami K."/>
            <person name="Yasuda T."/>
            <person name="Iwayanagi T."/>
            <person name="Wagatsuma M."/>
            <person name="Shiratori A."/>
            <person name="Sudo H."/>
            <person name="Hosoiri T."/>
            <person name="Kaku Y."/>
            <person name="Kodaira H."/>
            <person name="Kondo H."/>
            <person name="Sugawara M."/>
            <person name="Takahashi M."/>
            <person name="Kanda K."/>
            <person name="Yokoi T."/>
            <person name="Furuya T."/>
            <person name="Kikkawa E."/>
            <person name="Omura Y."/>
            <person name="Abe K."/>
            <person name="Kamihara K."/>
            <person name="Katsuta N."/>
            <person name="Sato K."/>
            <person name="Tanikawa M."/>
            <person name="Yamazaki M."/>
            <person name="Ninomiya K."/>
            <person name="Ishibashi T."/>
            <person name="Yamashita H."/>
            <person name="Murakawa K."/>
            <person name="Fujimori K."/>
            <person name="Tanai H."/>
            <person name="Kimata M."/>
            <person name="Watanabe M."/>
            <person name="Hiraoka S."/>
            <person name="Chiba Y."/>
            <person name="Ishida S."/>
            <person name="Ono Y."/>
            <person name="Takiguchi S."/>
            <person name="Watanabe S."/>
            <person name="Yosida M."/>
            <person name="Hotuta T."/>
            <person name="Kusano J."/>
            <person name="Kanehori K."/>
            <person name="Takahashi-Fujii A."/>
            <person name="Hara H."/>
            <person name="Tanase T.-O."/>
            <person name="Nomura Y."/>
            <person name="Togiya S."/>
            <person name="Komai F."/>
            <person name="Hara R."/>
            <person name="Takeuchi K."/>
            <person name="Arita M."/>
            <person name="Imose N."/>
            <person name="Musashino K."/>
            <person name="Yuuki H."/>
            <person name="Oshima A."/>
            <person name="Sasaki N."/>
            <person name="Aotsuka S."/>
            <person name="Yoshikawa Y."/>
            <person name="Matsunawa H."/>
            <person name="Ichihara T."/>
            <person name="Shiohata N."/>
            <person name="Sano S."/>
            <person name="Moriya S."/>
            <person name="Momiyama H."/>
            <person name="Satoh N."/>
            <person name="Takami S."/>
            <person name="Terashima Y."/>
            <person name="Suzuki O."/>
            <person name="Nakagawa S."/>
            <person name="Senoh A."/>
            <person name="Mizoguchi H."/>
            <person name="Goto Y."/>
            <person name="Shimizu F."/>
            <person name="Wakebe H."/>
            <person name="Hishigaki H."/>
            <person name="Watanabe T."/>
            <person name="Sugiyama A."/>
            <person name="Takemoto M."/>
            <person name="Kawakami B."/>
            <person name="Yamazaki M."/>
            <person name="Watanabe K."/>
            <person name="Kumagai A."/>
            <person name="Itakura S."/>
            <person name="Fukuzumi Y."/>
            <person name="Fujimori Y."/>
            <person name="Komiyama M."/>
            <person name="Tashiro H."/>
            <person name="Tanigami A."/>
            <person name="Fujiwara T."/>
            <person name="Ono T."/>
            <person name="Yamada K."/>
            <person name="Fujii Y."/>
            <person name="Ozaki K."/>
            <person name="Hirao M."/>
            <person name="Ohmori Y."/>
            <person name="Kawabata A."/>
            <person name="Hikiji T."/>
            <person name="Kobatake N."/>
            <person name="Inagaki H."/>
            <person name="Ikema Y."/>
            <person name="Okamoto S."/>
            <person name="Okitani R."/>
            <person name="Kawakami T."/>
            <person name="Noguchi S."/>
            <person name="Itoh T."/>
            <person name="Shigeta K."/>
            <person name="Senba T."/>
            <person name="Matsumura K."/>
            <person name="Nakajima Y."/>
            <person name="Mizuno T."/>
            <person name="Morinaga M."/>
            <person name="Sasaki M."/>
            <person name="Togashi T."/>
            <person name="Oyama M."/>
            <person name="Hata H."/>
            <person name="Watanabe M."/>
            <person name="Komatsu T."/>
            <person name="Mizushima-Sugano J."/>
            <person name="Satoh T."/>
            <person name="Shirai Y."/>
            <person name="Takahashi Y."/>
            <person name="Nakagawa K."/>
            <person name="Okumura K."/>
            <person name="Nagase T."/>
            <person name="Nomura N."/>
            <person name="Kikuchi H."/>
            <person name="Masuho Y."/>
            <person name="Yamashita R."/>
            <person name="Nakai K."/>
            <person name="Yada T."/>
            <person name="Nakamura Y."/>
            <person name="Ohara O."/>
            <person name="Isogai T."/>
            <person name="Sugano S."/>
        </authorList>
    </citation>
    <scope>NUCLEOTIDE SEQUENCE [LARGE SCALE MRNA] (ISOFORMS 3; 5 AND 9)</scope>
    <source>
        <tissue>Synovium</tissue>
        <tissue>Tongue</tissue>
    </source>
</reference>
<reference key="4">
    <citation type="journal article" date="2000" name="Genome Res.">
        <title>Comparative genome sequence analysis of the Bpa/Str region in mouse and man.</title>
        <authorList>
            <person name="Mallon A.-M."/>
            <person name="Platzer M."/>
            <person name="Bate R."/>
            <person name="Gloeckner G."/>
            <person name="Botcherby M.R.M."/>
            <person name="Nordsiek G."/>
            <person name="Strivens M.A."/>
            <person name="Kioschis P."/>
            <person name="Dangel A."/>
            <person name="Cunningham D."/>
            <person name="Straw R.N.A."/>
            <person name="Weston P."/>
            <person name="Gilbert M."/>
            <person name="Fernando S."/>
            <person name="Goodall K."/>
            <person name="Hunter G."/>
            <person name="Greystrong J.S."/>
            <person name="Clarke D."/>
            <person name="Kimberley C."/>
            <person name="Goerdes M."/>
            <person name="Blechschmidt K."/>
            <person name="Rump A."/>
            <person name="Hinzmann B."/>
            <person name="Mundy C.R."/>
            <person name="Miller W."/>
            <person name="Poustka A."/>
            <person name="Herman G.E."/>
            <person name="Rhodes M."/>
            <person name="Denny P."/>
            <person name="Rosenthal A."/>
            <person name="Brown S.D.M."/>
        </authorList>
    </citation>
    <scope>NUCLEOTIDE SEQUENCE [LARGE SCALE GENOMIC DNA]</scope>
</reference>
<reference key="5">
    <citation type="journal article" date="2005" name="Nature">
        <title>The DNA sequence of the human X chromosome.</title>
        <authorList>
            <person name="Ross M.T."/>
            <person name="Grafham D.V."/>
            <person name="Coffey A.J."/>
            <person name="Scherer S."/>
            <person name="McLay K."/>
            <person name="Muzny D."/>
            <person name="Platzer M."/>
            <person name="Howell G.R."/>
            <person name="Burrows C."/>
            <person name="Bird C.P."/>
            <person name="Frankish A."/>
            <person name="Lovell F.L."/>
            <person name="Howe K.L."/>
            <person name="Ashurst J.L."/>
            <person name="Fulton R.S."/>
            <person name="Sudbrak R."/>
            <person name="Wen G."/>
            <person name="Jones M.C."/>
            <person name="Hurles M.E."/>
            <person name="Andrews T.D."/>
            <person name="Scott C.E."/>
            <person name="Searle S."/>
            <person name="Ramser J."/>
            <person name="Whittaker A."/>
            <person name="Deadman R."/>
            <person name="Carter N.P."/>
            <person name="Hunt S.E."/>
            <person name="Chen R."/>
            <person name="Cree A."/>
            <person name="Gunaratne P."/>
            <person name="Havlak P."/>
            <person name="Hodgson A."/>
            <person name="Metzker M.L."/>
            <person name="Richards S."/>
            <person name="Scott G."/>
            <person name="Steffen D."/>
            <person name="Sodergren E."/>
            <person name="Wheeler D.A."/>
            <person name="Worley K.C."/>
            <person name="Ainscough R."/>
            <person name="Ambrose K.D."/>
            <person name="Ansari-Lari M.A."/>
            <person name="Aradhya S."/>
            <person name="Ashwell R.I."/>
            <person name="Babbage A.K."/>
            <person name="Bagguley C.L."/>
            <person name="Ballabio A."/>
            <person name="Banerjee R."/>
            <person name="Barker G.E."/>
            <person name="Barlow K.F."/>
            <person name="Barrett I.P."/>
            <person name="Bates K.N."/>
            <person name="Beare D.M."/>
            <person name="Beasley H."/>
            <person name="Beasley O."/>
            <person name="Beck A."/>
            <person name="Bethel G."/>
            <person name="Blechschmidt K."/>
            <person name="Brady N."/>
            <person name="Bray-Allen S."/>
            <person name="Bridgeman A.M."/>
            <person name="Brown A.J."/>
            <person name="Brown M.J."/>
            <person name="Bonnin D."/>
            <person name="Bruford E.A."/>
            <person name="Buhay C."/>
            <person name="Burch P."/>
            <person name="Burford D."/>
            <person name="Burgess J."/>
            <person name="Burrill W."/>
            <person name="Burton J."/>
            <person name="Bye J.M."/>
            <person name="Carder C."/>
            <person name="Carrel L."/>
            <person name="Chako J."/>
            <person name="Chapman J.C."/>
            <person name="Chavez D."/>
            <person name="Chen E."/>
            <person name="Chen G."/>
            <person name="Chen Y."/>
            <person name="Chen Z."/>
            <person name="Chinault C."/>
            <person name="Ciccodicola A."/>
            <person name="Clark S.Y."/>
            <person name="Clarke G."/>
            <person name="Clee C.M."/>
            <person name="Clegg S."/>
            <person name="Clerc-Blankenburg K."/>
            <person name="Clifford K."/>
            <person name="Cobley V."/>
            <person name="Cole C.G."/>
            <person name="Conquer J.S."/>
            <person name="Corby N."/>
            <person name="Connor R.E."/>
            <person name="David R."/>
            <person name="Davies J."/>
            <person name="Davis C."/>
            <person name="Davis J."/>
            <person name="Delgado O."/>
            <person name="Deshazo D."/>
            <person name="Dhami P."/>
            <person name="Ding Y."/>
            <person name="Dinh H."/>
            <person name="Dodsworth S."/>
            <person name="Draper H."/>
            <person name="Dugan-Rocha S."/>
            <person name="Dunham A."/>
            <person name="Dunn M."/>
            <person name="Durbin K.J."/>
            <person name="Dutta I."/>
            <person name="Eades T."/>
            <person name="Ellwood M."/>
            <person name="Emery-Cohen A."/>
            <person name="Errington H."/>
            <person name="Evans K.L."/>
            <person name="Faulkner L."/>
            <person name="Francis F."/>
            <person name="Frankland J."/>
            <person name="Fraser A.E."/>
            <person name="Galgoczy P."/>
            <person name="Gilbert J."/>
            <person name="Gill R."/>
            <person name="Gloeckner G."/>
            <person name="Gregory S.G."/>
            <person name="Gribble S."/>
            <person name="Griffiths C."/>
            <person name="Grocock R."/>
            <person name="Gu Y."/>
            <person name="Gwilliam R."/>
            <person name="Hamilton C."/>
            <person name="Hart E.A."/>
            <person name="Hawes A."/>
            <person name="Heath P.D."/>
            <person name="Heitmann K."/>
            <person name="Hennig S."/>
            <person name="Hernandez J."/>
            <person name="Hinzmann B."/>
            <person name="Ho S."/>
            <person name="Hoffs M."/>
            <person name="Howden P.J."/>
            <person name="Huckle E.J."/>
            <person name="Hume J."/>
            <person name="Hunt P.J."/>
            <person name="Hunt A.R."/>
            <person name="Isherwood J."/>
            <person name="Jacob L."/>
            <person name="Johnson D."/>
            <person name="Jones S."/>
            <person name="de Jong P.J."/>
            <person name="Joseph S.S."/>
            <person name="Keenan S."/>
            <person name="Kelly S."/>
            <person name="Kershaw J.K."/>
            <person name="Khan Z."/>
            <person name="Kioschis P."/>
            <person name="Klages S."/>
            <person name="Knights A.J."/>
            <person name="Kosiura A."/>
            <person name="Kovar-Smith C."/>
            <person name="Laird G.K."/>
            <person name="Langford C."/>
            <person name="Lawlor S."/>
            <person name="Leversha M."/>
            <person name="Lewis L."/>
            <person name="Liu W."/>
            <person name="Lloyd C."/>
            <person name="Lloyd D.M."/>
            <person name="Loulseged H."/>
            <person name="Loveland J.E."/>
            <person name="Lovell J.D."/>
            <person name="Lozado R."/>
            <person name="Lu J."/>
            <person name="Lyne R."/>
            <person name="Ma J."/>
            <person name="Maheshwari M."/>
            <person name="Matthews L.H."/>
            <person name="McDowall J."/>
            <person name="McLaren S."/>
            <person name="McMurray A."/>
            <person name="Meidl P."/>
            <person name="Meitinger T."/>
            <person name="Milne S."/>
            <person name="Miner G."/>
            <person name="Mistry S.L."/>
            <person name="Morgan M."/>
            <person name="Morris S."/>
            <person name="Mueller I."/>
            <person name="Mullikin J.C."/>
            <person name="Nguyen N."/>
            <person name="Nordsiek G."/>
            <person name="Nyakatura G."/>
            <person name="O'dell C.N."/>
            <person name="Okwuonu G."/>
            <person name="Palmer S."/>
            <person name="Pandian R."/>
            <person name="Parker D."/>
            <person name="Parrish J."/>
            <person name="Pasternak S."/>
            <person name="Patel D."/>
            <person name="Pearce A.V."/>
            <person name="Pearson D.M."/>
            <person name="Pelan S.E."/>
            <person name="Perez L."/>
            <person name="Porter K.M."/>
            <person name="Ramsey Y."/>
            <person name="Reichwald K."/>
            <person name="Rhodes S."/>
            <person name="Ridler K.A."/>
            <person name="Schlessinger D."/>
            <person name="Schueler M.G."/>
            <person name="Sehra H.K."/>
            <person name="Shaw-Smith C."/>
            <person name="Shen H."/>
            <person name="Sheridan E.M."/>
            <person name="Shownkeen R."/>
            <person name="Skuce C.D."/>
            <person name="Smith M.L."/>
            <person name="Sotheran E.C."/>
            <person name="Steingruber H.E."/>
            <person name="Steward C.A."/>
            <person name="Storey R."/>
            <person name="Swann R.M."/>
            <person name="Swarbreck D."/>
            <person name="Tabor P.E."/>
            <person name="Taudien S."/>
            <person name="Taylor T."/>
            <person name="Teague B."/>
            <person name="Thomas K."/>
            <person name="Thorpe A."/>
            <person name="Timms K."/>
            <person name="Tracey A."/>
            <person name="Trevanion S."/>
            <person name="Tromans A.C."/>
            <person name="d'Urso M."/>
            <person name="Verduzco D."/>
            <person name="Villasana D."/>
            <person name="Waldron L."/>
            <person name="Wall M."/>
            <person name="Wang Q."/>
            <person name="Warren J."/>
            <person name="Warry G.L."/>
            <person name="Wei X."/>
            <person name="West A."/>
            <person name="Whitehead S.L."/>
            <person name="Whiteley M.N."/>
            <person name="Wilkinson J.E."/>
            <person name="Willey D.L."/>
            <person name="Williams G."/>
            <person name="Williams L."/>
            <person name="Williamson A."/>
            <person name="Williamson H."/>
            <person name="Wilming L."/>
            <person name="Woodmansey R.L."/>
            <person name="Wray P.W."/>
            <person name="Yen J."/>
            <person name="Zhang J."/>
            <person name="Zhou J."/>
            <person name="Zoghbi H."/>
            <person name="Zorilla S."/>
            <person name="Buck D."/>
            <person name="Reinhardt R."/>
            <person name="Poustka A."/>
            <person name="Rosenthal A."/>
            <person name="Lehrach H."/>
            <person name="Meindl A."/>
            <person name="Minx P.J."/>
            <person name="Hillier L.W."/>
            <person name="Willard H.F."/>
            <person name="Wilson R.K."/>
            <person name="Waterston R.H."/>
            <person name="Rice C.M."/>
            <person name="Vaudin M."/>
            <person name="Coulson A."/>
            <person name="Nelson D.L."/>
            <person name="Weinstock G."/>
            <person name="Sulston J.E."/>
            <person name="Durbin R.M."/>
            <person name="Hubbard T."/>
            <person name="Gibbs R.A."/>
            <person name="Beck S."/>
            <person name="Rogers J."/>
            <person name="Bentley D.R."/>
        </authorList>
    </citation>
    <scope>NUCLEOTIDE SEQUENCE [LARGE SCALE GENOMIC DNA]</scope>
</reference>
<reference key="6">
    <citation type="submission" date="2005-09" db="EMBL/GenBank/DDBJ databases">
        <authorList>
            <person name="Mural R.J."/>
            <person name="Istrail S."/>
            <person name="Sutton G.G."/>
            <person name="Florea L."/>
            <person name="Halpern A.L."/>
            <person name="Mobarry C.M."/>
            <person name="Lippert R."/>
            <person name="Walenz B."/>
            <person name="Shatkay H."/>
            <person name="Dew I."/>
            <person name="Miller J.R."/>
            <person name="Flanigan M.J."/>
            <person name="Edwards N.J."/>
            <person name="Bolanos R."/>
            <person name="Fasulo D."/>
            <person name="Halldorsson B.V."/>
            <person name="Hannenhalli S."/>
            <person name="Turner R."/>
            <person name="Yooseph S."/>
            <person name="Lu F."/>
            <person name="Nusskern D.R."/>
            <person name="Shue B.C."/>
            <person name="Zheng X.H."/>
            <person name="Zhong F."/>
            <person name="Delcher A.L."/>
            <person name="Huson D.H."/>
            <person name="Kravitz S.A."/>
            <person name="Mouchard L."/>
            <person name="Reinert K."/>
            <person name="Remington K.A."/>
            <person name="Clark A.G."/>
            <person name="Waterman M.S."/>
            <person name="Eichler E.E."/>
            <person name="Adams M.D."/>
            <person name="Hunkapiller M.W."/>
            <person name="Myers E.W."/>
            <person name="Venter J.C."/>
        </authorList>
    </citation>
    <scope>NUCLEOTIDE SEQUENCE [LARGE SCALE GENOMIC DNA]</scope>
</reference>
<reference key="7">
    <citation type="journal article" date="2008" name="J. Proteome Res.">
        <title>Phosphoproteome of resting human platelets.</title>
        <authorList>
            <person name="Zahedi R.P."/>
            <person name="Lewandrowski U."/>
            <person name="Wiesner J."/>
            <person name="Wortelkamp S."/>
            <person name="Moebius J."/>
            <person name="Schuetz C."/>
            <person name="Walter U."/>
            <person name="Gambaryan S."/>
            <person name="Sickmann A."/>
        </authorList>
    </citation>
    <scope>IDENTIFICATION BY MASS SPECTROMETRY [LARGE SCALE ANALYSIS]</scope>
    <source>
        <tissue>Platelet</tissue>
    </source>
</reference>
<reference key="8">
    <citation type="journal article" date="2009" name="Anal. Chem.">
        <title>Lys-N and trypsin cover complementary parts of the phosphoproteome in a refined SCX-based approach.</title>
        <authorList>
            <person name="Gauci S."/>
            <person name="Helbig A.O."/>
            <person name="Slijper M."/>
            <person name="Krijgsveld J."/>
            <person name="Heck A.J."/>
            <person name="Mohammed S."/>
        </authorList>
    </citation>
    <scope>IDENTIFICATION BY MASS SPECTROMETRY [LARGE SCALE ANALYSIS]</scope>
</reference>
<reference key="9">
    <citation type="journal article" date="2013" name="J. Proteome Res.">
        <title>Toward a comprehensive characterization of a human cancer cell phosphoproteome.</title>
        <authorList>
            <person name="Zhou H."/>
            <person name="Di Palma S."/>
            <person name="Preisinger C."/>
            <person name="Peng M."/>
            <person name="Polat A.N."/>
            <person name="Heck A.J."/>
            <person name="Mohammed S."/>
        </authorList>
    </citation>
    <scope>PHOSPHORYLATION [LARGE SCALE ANALYSIS] AT THR-447; SER-453 AND SER-465</scope>
    <scope>PHOSPHORYLATION [LARGE SCALE ANALYSIS] AT SER-66 (ISOFORM 2)</scope>
    <scope>PHOSPHORYLATION [LARGE SCALE ANALYSIS] AT SER-206 (ISOFORM 3)</scope>
    <scope>IDENTIFICATION BY MASS SPECTROMETRY [LARGE SCALE ANALYSIS]</scope>
    <source>
        <tissue>Cervix carcinoma</tissue>
        <tissue>Erythroleukemia</tissue>
    </source>
</reference>
<reference key="10">
    <citation type="journal article" date="2014" name="J. Proteomics">
        <title>An enzyme assisted RP-RPLC approach for in-depth analysis of human liver phosphoproteome.</title>
        <authorList>
            <person name="Bian Y."/>
            <person name="Song C."/>
            <person name="Cheng K."/>
            <person name="Dong M."/>
            <person name="Wang F."/>
            <person name="Huang J."/>
            <person name="Sun D."/>
            <person name="Wang L."/>
            <person name="Ye M."/>
            <person name="Zou H."/>
        </authorList>
    </citation>
    <scope>IDENTIFICATION BY MASS SPECTROMETRY [LARGE SCALE ANALYSIS]</scope>
    <source>
        <tissue>Liver</tissue>
    </source>
</reference>
<accession>O15231</accession>
<accession>A4FTV3</accession>
<accession>A6NME5</accession>
<accession>B4DLE9</accession>
<accession>B7Z771</accession>
<accession>B8K2L9</accession>
<accession>B8K2M0</accession>
<accession>B8K2M1</accession>
<accession>B8K2M2</accession>
<accession>E9PFR6</accession>
<accession>F5GXF7</accession>
<accession>F5GZL4</accession>
<accession>F8W8V7</accession>
<accession>H0Y4M8</accession>
<accession>O00345</accession>
<accession>Q8N1R8</accession>
<accession>Q9NSD2</accession>
<name>ZN185_HUMAN</name>
<protein>
    <recommendedName>
        <fullName>Zinc finger protein 185</fullName>
    </recommendedName>
    <alternativeName>
        <fullName>LIM domain protein ZNF185</fullName>
    </alternativeName>
    <alternativeName>
        <fullName>P1-A</fullName>
    </alternativeName>
</protein>
<comment type="function">
    <text>May be involved in the regulation of cellular proliferation and/or differentiation.</text>
</comment>
<comment type="interaction">
    <interactant intactId="EBI-6874731">
        <id>O15231</id>
    </interactant>
    <interactant intactId="EBI-9357295">
        <id>Q9BTE6-2</id>
        <label>AARSD1</label>
    </interactant>
    <organismsDiffer>false</organismsDiffer>
    <experiments>3</experiments>
</comment>
<comment type="interaction">
    <interactant intactId="EBI-6874731">
        <id>O15231</id>
    </interactant>
    <interactant intactId="EBI-712912">
        <id>Q9HC52</id>
        <label>CBX8</label>
    </interactant>
    <organismsDiffer>false</organismsDiffer>
    <experiments>3</experiments>
</comment>
<comment type="interaction">
    <interactant intactId="EBI-6874731">
        <id>O15231</id>
    </interactant>
    <interactant intactId="EBI-742887">
        <id>Q8TAP6</id>
        <label>CEP76</label>
    </interactant>
    <organismsDiffer>false</organismsDiffer>
    <experiments>3</experiments>
</comment>
<comment type="interaction">
    <interactant intactId="EBI-6874731">
        <id>O15231</id>
    </interactant>
    <interactant intactId="EBI-7116203">
        <id>O75031</id>
        <label>HSF2BP</label>
    </interactant>
    <organismsDiffer>false</organismsDiffer>
    <experiments>3</experiments>
</comment>
<comment type="interaction">
    <interactant intactId="EBI-6874731">
        <id>O15231</id>
    </interactant>
    <interactant intactId="EBI-11959475">
        <id>P25791-3</id>
        <label>LMO2</label>
    </interactant>
    <organismsDiffer>false</organismsDiffer>
    <experiments>3</experiments>
</comment>
<comment type="interaction">
    <interactant intactId="EBI-6874731">
        <id>O15231</id>
    </interactant>
    <interactant intactId="EBI-10232538">
        <id>Q8WWB5</id>
        <label>PIH1D2</label>
    </interactant>
    <organismsDiffer>false</organismsDiffer>
    <experiments>3</experiments>
</comment>
<comment type="interaction">
    <interactant intactId="EBI-6874731">
        <id>O15231</id>
    </interactant>
    <interactant intactId="EBI-12845180">
        <id>Q6ZRT6</id>
        <label>PRR23B</label>
    </interactant>
    <organismsDiffer>false</organismsDiffer>
    <experiments>3</experiments>
</comment>
<comment type="subcellular location">
    <subcellularLocation>
        <location evidence="4">Cytoplasm</location>
        <location evidence="4">Cytoskeleton</location>
    </subcellularLocation>
    <subcellularLocation>
        <location evidence="4">Cell junction</location>
        <location evidence="4">Focal adhesion</location>
    </subcellularLocation>
</comment>
<comment type="alternative products">
    <event type="alternative splicing"/>
    <isoform>
        <id>O15231-1</id>
        <name>1</name>
        <sequence type="displayed"/>
    </isoform>
    <isoform>
        <id>O15231-2</id>
        <name>2</name>
        <sequence type="described" ref="VSP_039898 VSP_039899 VSP_039900 VSP_039901 VSP_039902"/>
    </isoform>
    <isoform>
        <id>O15231-3</id>
        <name>3</name>
        <sequence type="described" ref="VSP_039900"/>
    </isoform>
    <isoform>
        <id>O15231-4</id>
        <name>4</name>
        <sequence type="described" ref="VSP_043405"/>
    </isoform>
    <isoform>
        <id>O15231-5</id>
        <name>5</name>
        <sequence type="described" ref="VSP_045080 VSP_045081 VSP_043405"/>
    </isoform>
    <isoform>
        <id>O15231-6</id>
        <name>6</name>
        <sequence type="described" ref="VSP_047206"/>
    </isoform>
    <isoform>
        <id>O15231-7</id>
        <name>7</name>
        <sequence type="described" ref="VSP_047205"/>
    </isoform>
    <isoform>
        <id>O15231-8</id>
        <name>8</name>
        <sequence type="described" ref="VSP_047205 VSP_047206"/>
    </isoform>
    <isoform>
        <id>O15231-9</id>
        <name>9</name>
        <sequence type="described" ref="VSP_054773"/>
    </isoform>
</comment>
<comment type="tissue specificity">
    <text>Expressed in placenta, pancreas and kidney. Also expressed in prostate, testis, ovary and blood.</text>
</comment>
<organism>
    <name type="scientific">Homo sapiens</name>
    <name type="common">Human</name>
    <dbReference type="NCBI Taxonomy" id="9606"/>
    <lineage>
        <taxon>Eukaryota</taxon>
        <taxon>Metazoa</taxon>
        <taxon>Chordata</taxon>
        <taxon>Craniata</taxon>
        <taxon>Vertebrata</taxon>
        <taxon>Euteleostomi</taxon>
        <taxon>Mammalia</taxon>
        <taxon>Eutheria</taxon>
        <taxon>Euarchontoglires</taxon>
        <taxon>Primates</taxon>
        <taxon>Haplorrhini</taxon>
        <taxon>Catarrhini</taxon>
        <taxon>Hominidae</taxon>
        <taxon>Homo</taxon>
    </lineage>
</organism>
<keyword id="KW-0025">Alternative splicing</keyword>
<keyword id="KW-0965">Cell junction</keyword>
<keyword id="KW-0963">Cytoplasm</keyword>
<keyword id="KW-0206">Cytoskeleton</keyword>
<keyword id="KW-0440">LIM domain</keyword>
<keyword id="KW-0479">Metal-binding</keyword>
<keyword id="KW-0597">Phosphoprotein</keyword>
<keyword id="KW-1267">Proteomics identification</keyword>
<keyword id="KW-1185">Reference proteome</keyword>
<keyword id="KW-0862">Zinc</keyword>
<dbReference type="EMBL" id="AK095258">
    <property type="protein sequence ID" value="BAC04511.1"/>
    <property type="molecule type" value="mRNA"/>
</dbReference>
<dbReference type="EMBL" id="AY997296">
    <property type="protein sequence ID" value="AAY54245.1"/>
    <property type="molecule type" value="mRNA"/>
</dbReference>
<dbReference type="EMBL" id="DQ508022">
    <property type="protein sequence ID" value="ABF57657.1"/>
    <property type="molecule type" value="mRNA"/>
</dbReference>
<dbReference type="EMBL" id="DQ508023">
    <property type="protein sequence ID" value="ABF57658.1"/>
    <property type="molecule type" value="mRNA"/>
</dbReference>
<dbReference type="EMBL" id="DQ508024">
    <property type="protein sequence ID" value="ABF57659.1"/>
    <property type="molecule type" value="mRNA"/>
</dbReference>
<dbReference type="EMBL" id="DQ508025">
    <property type="protein sequence ID" value="ABF57660.1"/>
    <property type="molecule type" value="mRNA"/>
</dbReference>
<dbReference type="EMBL" id="DQ508026">
    <property type="protein sequence ID" value="ABF57661.1"/>
    <property type="molecule type" value="mRNA"/>
</dbReference>
<dbReference type="EMBL" id="Y09538">
    <property type="protein sequence ID" value="CAA70733.1"/>
    <property type="molecule type" value="mRNA"/>
</dbReference>
<dbReference type="EMBL" id="AK296967">
    <property type="protein sequence ID" value="BAG59511.1"/>
    <property type="molecule type" value="mRNA"/>
</dbReference>
<dbReference type="EMBL" id="AK301530">
    <property type="protein sequence ID" value="BAH13507.1"/>
    <property type="molecule type" value="mRNA"/>
</dbReference>
<dbReference type="EMBL" id="U82671">
    <property type="status" value="NOT_ANNOTATED_CDS"/>
    <property type="molecule type" value="Genomic_DNA"/>
</dbReference>
<dbReference type="EMBL" id="CH471172">
    <property type="protein sequence ID" value="EAW72895.1"/>
    <property type="molecule type" value="Genomic_DNA"/>
</dbReference>
<dbReference type="CCDS" id="CCDS48184.1">
    <molecule id="O15231-1"/>
</dbReference>
<dbReference type="CCDS" id="CCDS55528.1">
    <molecule id="O15231-3"/>
</dbReference>
<dbReference type="CCDS" id="CCDS55529.1">
    <molecule id="O15231-6"/>
</dbReference>
<dbReference type="CCDS" id="CCDS55530.1">
    <molecule id="O15231-8"/>
</dbReference>
<dbReference type="CCDS" id="CCDS55531.1">
    <molecule id="O15231-4"/>
</dbReference>
<dbReference type="CCDS" id="CCDS55532.1">
    <molecule id="O15231-5"/>
</dbReference>
<dbReference type="CCDS" id="CCDS69832.1">
    <molecule id="O15231-9"/>
</dbReference>
<dbReference type="RefSeq" id="NP_001171577.1">
    <molecule id="O15231-6"/>
    <property type="nucleotide sequence ID" value="NM_001178106.1"/>
</dbReference>
<dbReference type="RefSeq" id="NP_001171578.1">
    <molecule id="O15231-8"/>
    <property type="nucleotide sequence ID" value="NM_001178107.1"/>
</dbReference>
<dbReference type="RefSeq" id="NP_001171579.1">
    <molecule id="O15231-3"/>
    <property type="nucleotide sequence ID" value="NM_001178108.2"/>
</dbReference>
<dbReference type="RefSeq" id="NP_001171580.1">
    <molecule id="O15231-7"/>
    <property type="nucleotide sequence ID" value="NM_001178109.1"/>
</dbReference>
<dbReference type="RefSeq" id="NP_001171581.1">
    <molecule id="O15231-4"/>
    <property type="nucleotide sequence ID" value="NM_001178110.1"/>
</dbReference>
<dbReference type="RefSeq" id="NP_001171584.1">
    <molecule id="O15231-5"/>
    <property type="nucleotide sequence ID" value="NM_001178113.2"/>
</dbReference>
<dbReference type="RefSeq" id="NP_001171586.1">
    <molecule id="O15231-9"/>
    <property type="nucleotide sequence ID" value="NM_001178115.2"/>
</dbReference>
<dbReference type="RefSeq" id="NP_001375361.1">
    <molecule id="O15231-3"/>
    <property type="nucleotide sequence ID" value="NM_001388432.2"/>
</dbReference>
<dbReference type="RefSeq" id="NP_009081.2">
    <molecule id="O15231-1"/>
    <property type="nucleotide sequence ID" value="NM_007150.3"/>
</dbReference>
<dbReference type="RefSeq" id="XP_005274788.1">
    <property type="nucleotide sequence ID" value="XM_005274731.2"/>
</dbReference>
<dbReference type="RefSeq" id="XP_005274792.1">
    <property type="nucleotide sequence ID" value="XM_005274735.2"/>
</dbReference>
<dbReference type="RefSeq" id="XP_005274794.1">
    <property type="nucleotide sequence ID" value="XM_005274737.2"/>
</dbReference>
<dbReference type="RefSeq" id="XP_005274795.1">
    <molecule id="O15231-1"/>
    <property type="nucleotide sequence ID" value="XM_005274738.3"/>
</dbReference>
<dbReference type="RefSeq" id="XP_005274798.1">
    <molecule id="O15231-7"/>
    <property type="nucleotide sequence ID" value="XM_005274741.3"/>
</dbReference>
<dbReference type="RefSeq" id="XP_005274802.1">
    <molecule id="O15231-4"/>
    <property type="nucleotide sequence ID" value="XM_005274745.3"/>
</dbReference>
<dbReference type="RefSeq" id="XP_054183792.1">
    <molecule id="O15231-6"/>
    <property type="nucleotide sequence ID" value="XM_054327817.1"/>
</dbReference>
<dbReference type="RefSeq" id="XP_054183800.1">
    <molecule id="O15231-8"/>
    <property type="nucleotide sequence ID" value="XM_054327825.1"/>
</dbReference>
<dbReference type="RefSeq" id="XP_054183801.1">
    <molecule id="O15231-1"/>
    <property type="nucleotide sequence ID" value="XM_054327826.1"/>
</dbReference>
<dbReference type="RefSeq" id="XP_054183811.1">
    <molecule id="O15231-7"/>
    <property type="nucleotide sequence ID" value="XM_054327836.1"/>
</dbReference>
<dbReference type="RefSeq" id="XP_054183819.1">
    <molecule id="O15231-4"/>
    <property type="nucleotide sequence ID" value="XM_054327844.1"/>
</dbReference>
<dbReference type="RefSeq" id="XP_054189331.1">
    <molecule id="O15231-6"/>
    <property type="nucleotide sequence ID" value="XM_054333356.1"/>
</dbReference>
<dbReference type="RefSeq" id="XP_054189339.1">
    <molecule id="O15231-8"/>
    <property type="nucleotide sequence ID" value="XM_054333364.1"/>
</dbReference>
<dbReference type="RefSeq" id="XP_054189340.1">
    <molecule id="O15231-1"/>
    <property type="nucleotide sequence ID" value="XM_054333365.1"/>
</dbReference>
<dbReference type="RefSeq" id="XP_054189349.1">
    <molecule id="O15231-7"/>
    <property type="nucleotide sequence ID" value="XM_054333374.1"/>
</dbReference>
<dbReference type="RefSeq" id="XP_054189357.1">
    <molecule id="O15231-4"/>
    <property type="nucleotide sequence ID" value="XM_054333382.1"/>
</dbReference>
<dbReference type="BioGRID" id="113525">
    <property type="interactions" value="73"/>
</dbReference>
<dbReference type="FunCoup" id="O15231">
    <property type="interactions" value="250"/>
</dbReference>
<dbReference type="IntAct" id="O15231">
    <property type="interactions" value="37"/>
</dbReference>
<dbReference type="MINT" id="O15231"/>
<dbReference type="STRING" id="9606.ENSP00000440847"/>
<dbReference type="GlyGen" id="O15231">
    <property type="glycosylation" value="4 sites, 1 O-linked glycan (4 sites)"/>
</dbReference>
<dbReference type="iPTMnet" id="O15231"/>
<dbReference type="PhosphoSitePlus" id="O15231"/>
<dbReference type="SwissPalm" id="O15231"/>
<dbReference type="BioMuta" id="ZNF185"/>
<dbReference type="jPOST" id="O15231"/>
<dbReference type="MassIVE" id="O15231"/>
<dbReference type="PaxDb" id="9606-ENSP00000440847"/>
<dbReference type="PeptideAtlas" id="O15231"/>
<dbReference type="ProteomicsDB" id="24410"/>
<dbReference type="ProteomicsDB" id="25065"/>
<dbReference type="ProteomicsDB" id="30212"/>
<dbReference type="ProteomicsDB" id="34782"/>
<dbReference type="ProteomicsDB" id="48523">
    <molecule id="O15231-1"/>
</dbReference>
<dbReference type="ProteomicsDB" id="48524">
    <molecule id="O15231-2"/>
</dbReference>
<dbReference type="ProteomicsDB" id="48525">
    <molecule id="O15231-3"/>
</dbReference>
<dbReference type="ProteomicsDB" id="48526">
    <molecule id="O15231-4"/>
</dbReference>
<dbReference type="Pumba" id="O15231"/>
<dbReference type="Antibodypedia" id="614">
    <property type="antibodies" value="133 antibodies from 19 providers"/>
</dbReference>
<dbReference type="DNASU" id="7739"/>
<dbReference type="Ensembl" id="ENST00000318504.12">
    <molecule id="O15231-4"/>
    <property type="protein sequence ID" value="ENSP00000312782.7"/>
    <property type="gene ID" value="ENSG00000147394.20"/>
</dbReference>
<dbReference type="Ensembl" id="ENST00000318529.13">
    <molecule id="O15231-5"/>
    <property type="protein sequence ID" value="ENSP00000313919.8"/>
    <property type="gene ID" value="ENSG00000147394.20"/>
</dbReference>
<dbReference type="Ensembl" id="ENST00000370268.8">
    <molecule id="O15231-1"/>
    <property type="protein sequence ID" value="ENSP00000359291.4"/>
    <property type="gene ID" value="ENSG00000147394.20"/>
</dbReference>
<dbReference type="Ensembl" id="ENST00000449285.6">
    <molecule id="O15231-3"/>
    <property type="protein sequence ID" value="ENSP00000395228.2"/>
    <property type="gene ID" value="ENSG00000147394.20"/>
</dbReference>
<dbReference type="Ensembl" id="ENST00000454925.1">
    <molecule id="O15231-9"/>
    <property type="protein sequence ID" value="ENSP00000392984.2"/>
    <property type="gene ID" value="ENSG00000147394.20"/>
</dbReference>
<dbReference type="Ensembl" id="ENST00000535861.6">
    <molecule id="O15231-6"/>
    <property type="protein sequence ID" value="ENSP00000440847.1"/>
    <property type="gene ID" value="ENSG00000147394.20"/>
</dbReference>
<dbReference type="Ensembl" id="ENST00000539731.6">
    <molecule id="O15231-8"/>
    <property type="protein sequence ID" value="ENSP00000444367.1"/>
    <property type="gene ID" value="ENSG00000147394.20"/>
</dbReference>
<dbReference type="Ensembl" id="ENST00000710011.1">
    <molecule id="O15231-3"/>
    <property type="protein sequence ID" value="ENSP00000517992.1"/>
    <property type="gene ID" value="ENSG00000292196.1"/>
</dbReference>
<dbReference type="Ensembl" id="ENST00000710012.1">
    <molecule id="O15231-8"/>
    <property type="protein sequence ID" value="ENSP00000517993.1"/>
    <property type="gene ID" value="ENSG00000292196.1"/>
</dbReference>
<dbReference type="Ensembl" id="ENST00000710013.1">
    <molecule id="O15231-1"/>
    <property type="protein sequence ID" value="ENSP00000517994.1"/>
    <property type="gene ID" value="ENSG00000292196.1"/>
</dbReference>
<dbReference type="Ensembl" id="ENST00000710015.1">
    <molecule id="O15231-4"/>
    <property type="protein sequence ID" value="ENSP00000517996.1"/>
    <property type="gene ID" value="ENSG00000292196.1"/>
</dbReference>
<dbReference type="Ensembl" id="ENST00000710016.1">
    <molecule id="O15231-6"/>
    <property type="protein sequence ID" value="ENSP00000517997.1"/>
    <property type="gene ID" value="ENSG00000292196.1"/>
</dbReference>
<dbReference type="Ensembl" id="ENST00000710017.1">
    <molecule id="O15231-5"/>
    <property type="protein sequence ID" value="ENSP00000517998.1"/>
    <property type="gene ID" value="ENSG00000292196.1"/>
</dbReference>
<dbReference type="Ensembl" id="ENST00000710020.1">
    <molecule id="O15231-9"/>
    <property type="protein sequence ID" value="ENSP00000518001.1"/>
    <property type="gene ID" value="ENSG00000292196.1"/>
</dbReference>
<dbReference type="GeneID" id="7739"/>
<dbReference type="KEGG" id="hsa:7739"/>
<dbReference type="UCSC" id="uc004fgw.5">
    <molecule id="O15231-1"/>
    <property type="organism name" value="human"/>
</dbReference>
<dbReference type="AGR" id="HGNC:12976"/>
<dbReference type="CTD" id="7739"/>
<dbReference type="DisGeNET" id="7739"/>
<dbReference type="GeneCards" id="ZNF185"/>
<dbReference type="HGNC" id="HGNC:12976">
    <property type="gene designation" value="ZNF185"/>
</dbReference>
<dbReference type="HPA" id="ENSG00000147394">
    <property type="expression patterns" value="Tissue enhanced (epididymis, esophagus)"/>
</dbReference>
<dbReference type="MIM" id="300381">
    <property type="type" value="gene"/>
</dbReference>
<dbReference type="neXtProt" id="NX_O15231"/>
<dbReference type="OpenTargets" id="ENSG00000147394"/>
<dbReference type="PharmGKB" id="PA37558"/>
<dbReference type="VEuPathDB" id="HostDB:ENSG00000147394"/>
<dbReference type="eggNOG" id="KOG1704">
    <property type="taxonomic scope" value="Eukaryota"/>
</dbReference>
<dbReference type="GeneTree" id="ENSGT00530000063872"/>
<dbReference type="HOGENOM" id="CLU_031517_0_0_1"/>
<dbReference type="InParanoid" id="O15231"/>
<dbReference type="OMA" id="SGRICTY"/>
<dbReference type="OrthoDB" id="8909291at2759"/>
<dbReference type="PAN-GO" id="O15231">
    <property type="GO annotations" value="0 GO annotations based on evolutionary models"/>
</dbReference>
<dbReference type="PhylomeDB" id="O15231"/>
<dbReference type="TreeFam" id="TF335114"/>
<dbReference type="PathwayCommons" id="O15231"/>
<dbReference type="SignaLink" id="O15231"/>
<dbReference type="BioGRID-ORCS" id="7739">
    <property type="hits" value="18 hits in 773 CRISPR screens"/>
</dbReference>
<dbReference type="ChiTaRS" id="ZNF185">
    <property type="organism name" value="human"/>
</dbReference>
<dbReference type="GenomeRNAi" id="7739"/>
<dbReference type="Pharos" id="O15231">
    <property type="development level" value="Tbio"/>
</dbReference>
<dbReference type="PRO" id="PR:O15231"/>
<dbReference type="Proteomes" id="UP000005640">
    <property type="component" value="Chromosome X"/>
</dbReference>
<dbReference type="RNAct" id="O15231">
    <property type="molecule type" value="protein"/>
</dbReference>
<dbReference type="Bgee" id="ENSG00000147394">
    <property type="expression patterns" value="Expressed in tongue squamous epithelium and 177 other cell types or tissues"/>
</dbReference>
<dbReference type="ExpressionAtlas" id="O15231">
    <property type="expression patterns" value="baseline and differential"/>
</dbReference>
<dbReference type="GO" id="GO:0005737">
    <property type="term" value="C:cytoplasm"/>
    <property type="evidence" value="ECO:0007669"/>
    <property type="project" value="UniProtKB-KW"/>
</dbReference>
<dbReference type="GO" id="GO:0005856">
    <property type="term" value="C:cytoskeleton"/>
    <property type="evidence" value="ECO:0007669"/>
    <property type="project" value="UniProtKB-SubCell"/>
</dbReference>
<dbReference type="GO" id="GO:0005925">
    <property type="term" value="C:focal adhesion"/>
    <property type="evidence" value="ECO:0007669"/>
    <property type="project" value="UniProtKB-SubCell"/>
</dbReference>
<dbReference type="GO" id="GO:0008270">
    <property type="term" value="F:zinc ion binding"/>
    <property type="evidence" value="ECO:0000304"/>
    <property type="project" value="ProtInc"/>
</dbReference>
<dbReference type="CDD" id="cd08368">
    <property type="entry name" value="LIM"/>
    <property type="match status" value="1"/>
</dbReference>
<dbReference type="FunFam" id="2.10.110.10:FF:000101">
    <property type="entry name" value="Zinc finger protein 185 with LIM domain"/>
    <property type="match status" value="1"/>
</dbReference>
<dbReference type="Gene3D" id="2.10.110.10">
    <property type="entry name" value="Cysteine Rich Protein"/>
    <property type="match status" value="1"/>
</dbReference>
<dbReference type="InterPro" id="IPR052621">
    <property type="entry name" value="Cell_Prolif/Cornif_Regul"/>
</dbReference>
<dbReference type="InterPro" id="IPR001781">
    <property type="entry name" value="Znf_LIM"/>
</dbReference>
<dbReference type="PANTHER" id="PTHR15468:SF2">
    <property type="entry name" value="ZINC FINGER PROTEIN 185"/>
    <property type="match status" value="1"/>
</dbReference>
<dbReference type="PANTHER" id="PTHR15468">
    <property type="entry name" value="ZNF185"/>
    <property type="match status" value="1"/>
</dbReference>
<dbReference type="SMART" id="SM00132">
    <property type="entry name" value="LIM"/>
    <property type="match status" value="1"/>
</dbReference>
<dbReference type="PROSITE" id="PS00478">
    <property type="entry name" value="LIM_DOMAIN_1"/>
    <property type="match status" value="1"/>
</dbReference>
<dbReference type="PROSITE" id="PS50023">
    <property type="entry name" value="LIM_DOMAIN_2"/>
    <property type="match status" value="1"/>
</dbReference>